<dbReference type="EC" id="2.8.1.-" evidence="1"/>
<dbReference type="EMBL" id="CP000103">
    <property type="protein sequence ID" value="ABB73817.1"/>
    <property type="molecule type" value="Genomic_DNA"/>
</dbReference>
<dbReference type="RefSeq" id="WP_011379871.1">
    <property type="nucleotide sequence ID" value="NC_007614.1"/>
</dbReference>
<dbReference type="SMR" id="Q2YBQ4"/>
<dbReference type="STRING" id="323848.Nmul_A0509"/>
<dbReference type="KEGG" id="nmu:Nmul_A0509"/>
<dbReference type="eggNOG" id="COG0037">
    <property type="taxonomic scope" value="Bacteria"/>
</dbReference>
<dbReference type="HOGENOM" id="CLU_026481_0_0_4"/>
<dbReference type="OrthoDB" id="9801054at2"/>
<dbReference type="Proteomes" id="UP000002718">
    <property type="component" value="Chromosome"/>
</dbReference>
<dbReference type="GO" id="GO:0005737">
    <property type="term" value="C:cytoplasm"/>
    <property type="evidence" value="ECO:0007669"/>
    <property type="project" value="UniProtKB-SubCell"/>
</dbReference>
<dbReference type="GO" id="GO:0051539">
    <property type="term" value="F:4 iron, 4 sulfur cluster binding"/>
    <property type="evidence" value="ECO:0007669"/>
    <property type="project" value="UniProtKB-UniRule"/>
</dbReference>
<dbReference type="GO" id="GO:0005524">
    <property type="term" value="F:ATP binding"/>
    <property type="evidence" value="ECO:0007669"/>
    <property type="project" value="UniProtKB-UniRule"/>
</dbReference>
<dbReference type="GO" id="GO:0000287">
    <property type="term" value="F:magnesium ion binding"/>
    <property type="evidence" value="ECO:0007669"/>
    <property type="project" value="UniProtKB-UniRule"/>
</dbReference>
<dbReference type="GO" id="GO:0016783">
    <property type="term" value="F:sulfurtransferase activity"/>
    <property type="evidence" value="ECO:0007669"/>
    <property type="project" value="UniProtKB-UniRule"/>
</dbReference>
<dbReference type="GO" id="GO:0000049">
    <property type="term" value="F:tRNA binding"/>
    <property type="evidence" value="ECO:0007669"/>
    <property type="project" value="UniProtKB-KW"/>
</dbReference>
<dbReference type="GO" id="GO:0034227">
    <property type="term" value="P:tRNA thio-modification"/>
    <property type="evidence" value="ECO:0007669"/>
    <property type="project" value="UniProtKB-UniRule"/>
</dbReference>
<dbReference type="CDD" id="cd24138">
    <property type="entry name" value="TtcA-like"/>
    <property type="match status" value="1"/>
</dbReference>
<dbReference type="Gene3D" id="3.40.50.620">
    <property type="entry name" value="HUPs"/>
    <property type="match status" value="1"/>
</dbReference>
<dbReference type="HAMAP" id="MF_01850">
    <property type="entry name" value="TtcA"/>
    <property type="match status" value="1"/>
</dbReference>
<dbReference type="InterPro" id="IPR014729">
    <property type="entry name" value="Rossmann-like_a/b/a_fold"/>
</dbReference>
<dbReference type="InterPro" id="IPR011063">
    <property type="entry name" value="TilS/TtcA_N"/>
</dbReference>
<dbReference type="InterPro" id="IPR012089">
    <property type="entry name" value="tRNA_Cyd_32_2_STrfase"/>
</dbReference>
<dbReference type="InterPro" id="IPR035107">
    <property type="entry name" value="tRNA_thiolation_TtcA_Ctu1"/>
</dbReference>
<dbReference type="NCBIfam" id="NF007972">
    <property type="entry name" value="PRK10696.1"/>
    <property type="match status" value="1"/>
</dbReference>
<dbReference type="PANTHER" id="PTHR43686:SF1">
    <property type="entry name" value="AMINOTRAN_5 DOMAIN-CONTAINING PROTEIN"/>
    <property type="match status" value="1"/>
</dbReference>
<dbReference type="PANTHER" id="PTHR43686">
    <property type="entry name" value="SULFURTRANSFERASE-RELATED"/>
    <property type="match status" value="1"/>
</dbReference>
<dbReference type="Pfam" id="PF01171">
    <property type="entry name" value="ATP_bind_3"/>
    <property type="match status" value="1"/>
</dbReference>
<dbReference type="PIRSF" id="PIRSF004976">
    <property type="entry name" value="ATPase_YdaO"/>
    <property type="match status" value="1"/>
</dbReference>
<dbReference type="SUPFAM" id="SSF52402">
    <property type="entry name" value="Adenine nucleotide alpha hydrolases-like"/>
    <property type="match status" value="1"/>
</dbReference>
<gene>
    <name evidence="1" type="primary">ttcA</name>
    <name type="ordered locus">Nmul_A0509</name>
</gene>
<proteinExistence type="inferred from homology"/>
<feature type="chain" id="PRO_0000348778" description="tRNA-cytidine(32) 2-sulfurtransferase">
    <location>
        <begin position="1"/>
        <end position="298"/>
    </location>
</feature>
<feature type="short sequence motif" description="PP-loop motif" evidence="1">
    <location>
        <begin position="48"/>
        <end position="53"/>
    </location>
</feature>
<feature type="binding site" evidence="1">
    <location>
        <position position="123"/>
    </location>
    <ligand>
        <name>[4Fe-4S] cluster</name>
        <dbReference type="ChEBI" id="CHEBI:49883"/>
    </ligand>
</feature>
<feature type="binding site" evidence="1">
    <location>
        <position position="126"/>
    </location>
    <ligand>
        <name>[4Fe-4S] cluster</name>
        <dbReference type="ChEBI" id="CHEBI:49883"/>
    </ligand>
</feature>
<feature type="binding site" evidence="1">
    <location>
        <position position="214"/>
    </location>
    <ligand>
        <name>[4Fe-4S] cluster</name>
        <dbReference type="ChEBI" id="CHEBI:49883"/>
    </ligand>
</feature>
<accession>Q2YBQ4</accession>
<evidence type="ECO:0000255" key="1">
    <source>
        <dbReference type="HAMAP-Rule" id="MF_01850"/>
    </source>
</evidence>
<keyword id="KW-0004">4Fe-4S</keyword>
<keyword id="KW-0067">ATP-binding</keyword>
<keyword id="KW-0963">Cytoplasm</keyword>
<keyword id="KW-0408">Iron</keyword>
<keyword id="KW-0411">Iron-sulfur</keyword>
<keyword id="KW-0460">Magnesium</keyword>
<keyword id="KW-0479">Metal-binding</keyword>
<keyword id="KW-0547">Nucleotide-binding</keyword>
<keyword id="KW-1185">Reference proteome</keyword>
<keyword id="KW-0694">RNA-binding</keyword>
<keyword id="KW-0808">Transferase</keyword>
<keyword id="KW-0819">tRNA processing</keyword>
<keyword id="KW-0820">tRNA-binding</keyword>
<organism>
    <name type="scientific">Nitrosospira multiformis (strain ATCC 25196 / NCIMB 11849 / C 71)</name>
    <dbReference type="NCBI Taxonomy" id="323848"/>
    <lineage>
        <taxon>Bacteria</taxon>
        <taxon>Pseudomonadati</taxon>
        <taxon>Pseudomonadota</taxon>
        <taxon>Betaproteobacteria</taxon>
        <taxon>Nitrosomonadales</taxon>
        <taxon>Nitrosomonadaceae</taxon>
        <taxon>Nitrosospira</taxon>
    </lineage>
</organism>
<sequence length="298" mass="33481">MGTGIEMLSRKEQHNANKLHKRLRRLVGTAIADFNMIESGDRVMVCLSGGKDSYALLDILRSLQAHAATQFELIAVNLDQKQPGFPEHVLPNYLTSIGMPFRIVEQDTYSVVKRLIPEGKTTCSLCSRLRRGVLYRVADELGATKIALGHHRDDILETLLLNLFHGGKLKTMPPKLVSDDGKHIVIRPLAYCKEKDLAAYAEMENFPIIPCNLCGSQKNMQRQVVKEMLQQWDKKFPGRLENMFSSLQNIQPSHLLDSSLYDFHGLKTGNGPVVDGDRAFDPEPFEPGVEELLSLNKD</sequence>
<reference key="1">
    <citation type="submission" date="2005-08" db="EMBL/GenBank/DDBJ databases">
        <title>Complete sequence of chromosome 1 of Nitrosospira multiformis ATCC 25196.</title>
        <authorList>
            <person name="Copeland A."/>
            <person name="Lucas S."/>
            <person name="Lapidus A."/>
            <person name="Barry K."/>
            <person name="Detter J.C."/>
            <person name="Glavina T."/>
            <person name="Hammon N."/>
            <person name="Israni S."/>
            <person name="Pitluck S."/>
            <person name="Chain P."/>
            <person name="Malfatti S."/>
            <person name="Shin M."/>
            <person name="Vergez L."/>
            <person name="Schmutz J."/>
            <person name="Larimer F."/>
            <person name="Land M."/>
            <person name="Hauser L."/>
            <person name="Kyrpides N."/>
            <person name="Lykidis A."/>
            <person name="Richardson P."/>
        </authorList>
    </citation>
    <scope>NUCLEOTIDE SEQUENCE [LARGE SCALE GENOMIC DNA]</scope>
    <source>
        <strain>ATCC 25196 / NCIMB 11849 / C 71</strain>
    </source>
</reference>
<protein>
    <recommendedName>
        <fullName evidence="1">tRNA-cytidine(32) 2-sulfurtransferase</fullName>
        <ecNumber evidence="1">2.8.1.-</ecNumber>
    </recommendedName>
    <alternativeName>
        <fullName evidence="1">Two-thiocytidine biosynthesis protein A</fullName>
    </alternativeName>
    <alternativeName>
        <fullName evidence="1">tRNA 2-thiocytidine biosynthesis protein TtcA</fullName>
    </alternativeName>
</protein>
<name>TTCA_NITMU</name>
<comment type="function">
    <text evidence="1">Catalyzes the ATP-dependent 2-thiolation of cytidine in position 32 of tRNA, to form 2-thiocytidine (s(2)C32). The sulfur atoms are provided by the cysteine/cysteine desulfurase (IscS) system.</text>
</comment>
<comment type="catalytic activity">
    <reaction evidence="1">
        <text>cytidine(32) in tRNA + S-sulfanyl-L-cysteinyl-[cysteine desulfurase] + AH2 + ATP = 2-thiocytidine(32) in tRNA + L-cysteinyl-[cysteine desulfurase] + A + AMP + diphosphate + H(+)</text>
        <dbReference type="Rhea" id="RHEA:57048"/>
        <dbReference type="Rhea" id="RHEA-COMP:10288"/>
        <dbReference type="Rhea" id="RHEA-COMP:12157"/>
        <dbReference type="Rhea" id="RHEA-COMP:12158"/>
        <dbReference type="Rhea" id="RHEA-COMP:14821"/>
        <dbReference type="ChEBI" id="CHEBI:13193"/>
        <dbReference type="ChEBI" id="CHEBI:15378"/>
        <dbReference type="ChEBI" id="CHEBI:17499"/>
        <dbReference type="ChEBI" id="CHEBI:29950"/>
        <dbReference type="ChEBI" id="CHEBI:30616"/>
        <dbReference type="ChEBI" id="CHEBI:33019"/>
        <dbReference type="ChEBI" id="CHEBI:61963"/>
        <dbReference type="ChEBI" id="CHEBI:82748"/>
        <dbReference type="ChEBI" id="CHEBI:141453"/>
        <dbReference type="ChEBI" id="CHEBI:456215"/>
    </reaction>
    <physiologicalReaction direction="left-to-right" evidence="1">
        <dbReference type="Rhea" id="RHEA:57049"/>
    </physiologicalReaction>
</comment>
<comment type="cofactor">
    <cofactor evidence="1">
        <name>Mg(2+)</name>
        <dbReference type="ChEBI" id="CHEBI:18420"/>
    </cofactor>
</comment>
<comment type="cofactor">
    <cofactor evidence="1">
        <name>[4Fe-4S] cluster</name>
        <dbReference type="ChEBI" id="CHEBI:49883"/>
    </cofactor>
    <text evidence="1">Binds 1 [4Fe-4S] cluster per subunit. The cluster is chelated by three Cys residues, the fourth Fe has a free coordination site that may bind a sulfur atom transferred from the persulfide of IscS.</text>
</comment>
<comment type="pathway">
    <text evidence="1">tRNA modification.</text>
</comment>
<comment type="subunit">
    <text evidence="1">Homodimer.</text>
</comment>
<comment type="subcellular location">
    <subcellularLocation>
        <location evidence="1">Cytoplasm</location>
    </subcellularLocation>
</comment>
<comment type="miscellaneous">
    <text evidence="1">The thiolation reaction likely consists of two steps: a first activation step by ATP to form an adenylated intermediate of the target base of tRNA, and a second nucleophilic substitution step of the sulfur (S) atom supplied by the hydrosulfide attached to the Fe-S cluster.</text>
</comment>
<comment type="similarity">
    <text evidence="1">Belongs to the TtcA family.</text>
</comment>